<gene>
    <name evidence="1" type="primary">nadA</name>
    <name type="ordered locus">E2348C_0627</name>
</gene>
<dbReference type="EC" id="2.5.1.72" evidence="1"/>
<dbReference type="EMBL" id="FM180568">
    <property type="protein sequence ID" value="CAS08175.1"/>
    <property type="molecule type" value="Genomic_DNA"/>
</dbReference>
<dbReference type="RefSeq" id="WP_000115299.1">
    <property type="nucleotide sequence ID" value="NC_011601.1"/>
</dbReference>
<dbReference type="SMR" id="B7ULM3"/>
<dbReference type="KEGG" id="ecg:E2348C_0627"/>
<dbReference type="HOGENOM" id="CLU_047382_1_0_6"/>
<dbReference type="UniPathway" id="UPA00253">
    <property type="reaction ID" value="UER00327"/>
</dbReference>
<dbReference type="Proteomes" id="UP000008205">
    <property type="component" value="Chromosome"/>
</dbReference>
<dbReference type="GO" id="GO:0005829">
    <property type="term" value="C:cytosol"/>
    <property type="evidence" value="ECO:0007669"/>
    <property type="project" value="TreeGrafter"/>
</dbReference>
<dbReference type="GO" id="GO:0051539">
    <property type="term" value="F:4 iron, 4 sulfur cluster binding"/>
    <property type="evidence" value="ECO:0007669"/>
    <property type="project" value="UniProtKB-KW"/>
</dbReference>
<dbReference type="GO" id="GO:0046872">
    <property type="term" value="F:metal ion binding"/>
    <property type="evidence" value="ECO:0007669"/>
    <property type="project" value="UniProtKB-KW"/>
</dbReference>
<dbReference type="GO" id="GO:0008987">
    <property type="term" value="F:quinolinate synthetase A activity"/>
    <property type="evidence" value="ECO:0007669"/>
    <property type="project" value="UniProtKB-UniRule"/>
</dbReference>
<dbReference type="GO" id="GO:0034628">
    <property type="term" value="P:'de novo' NAD biosynthetic process from L-aspartate"/>
    <property type="evidence" value="ECO:0007669"/>
    <property type="project" value="TreeGrafter"/>
</dbReference>
<dbReference type="FunFam" id="3.40.50.10800:FF:000003">
    <property type="entry name" value="Quinolinate synthase A"/>
    <property type="match status" value="1"/>
</dbReference>
<dbReference type="Gene3D" id="3.40.50.10800">
    <property type="entry name" value="NadA-like"/>
    <property type="match status" value="3"/>
</dbReference>
<dbReference type="HAMAP" id="MF_00567">
    <property type="entry name" value="NadA_type1"/>
    <property type="match status" value="1"/>
</dbReference>
<dbReference type="InterPro" id="IPR003473">
    <property type="entry name" value="NadA"/>
</dbReference>
<dbReference type="InterPro" id="IPR036094">
    <property type="entry name" value="NadA_sf"/>
</dbReference>
<dbReference type="InterPro" id="IPR023513">
    <property type="entry name" value="Quinolinate_synth_A_type1"/>
</dbReference>
<dbReference type="NCBIfam" id="TIGR00550">
    <property type="entry name" value="nadA"/>
    <property type="match status" value="1"/>
</dbReference>
<dbReference type="NCBIfam" id="NF006877">
    <property type="entry name" value="PRK09375.1-1"/>
    <property type="match status" value="1"/>
</dbReference>
<dbReference type="NCBIfam" id="NF006878">
    <property type="entry name" value="PRK09375.1-2"/>
    <property type="match status" value="1"/>
</dbReference>
<dbReference type="PANTHER" id="PTHR30573:SF0">
    <property type="entry name" value="QUINOLINATE SYNTHASE, CHLOROPLASTIC"/>
    <property type="match status" value="1"/>
</dbReference>
<dbReference type="PANTHER" id="PTHR30573">
    <property type="entry name" value="QUINOLINATE SYNTHETASE A"/>
    <property type="match status" value="1"/>
</dbReference>
<dbReference type="Pfam" id="PF02445">
    <property type="entry name" value="NadA"/>
    <property type="match status" value="1"/>
</dbReference>
<dbReference type="SUPFAM" id="SSF142754">
    <property type="entry name" value="NadA-like"/>
    <property type="match status" value="1"/>
</dbReference>
<organism>
    <name type="scientific">Escherichia coli O127:H6 (strain E2348/69 / EPEC)</name>
    <dbReference type="NCBI Taxonomy" id="574521"/>
    <lineage>
        <taxon>Bacteria</taxon>
        <taxon>Pseudomonadati</taxon>
        <taxon>Pseudomonadota</taxon>
        <taxon>Gammaproteobacteria</taxon>
        <taxon>Enterobacterales</taxon>
        <taxon>Enterobacteriaceae</taxon>
        <taxon>Escherichia</taxon>
    </lineage>
</organism>
<name>NADA_ECO27</name>
<evidence type="ECO:0000255" key="1">
    <source>
        <dbReference type="HAMAP-Rule" id="MF_00567"/>
    </source>
</evidence>
<comment type="function">
    <text evidence="1">Catalyzes the condensation of iminoaspartate with dihydroxyacetone phosphate to form quinolinate.</text>
</comment>
<comment type="catalytic activity">
    <reaction evidence="1">
        <text>iminosuccinate + dihydroxyacetone phosphate = quinolinate + phosphate + 2 H2O + H(+)</text>
        <dbReference type="Rhea" id="RHEA:25888"/>
        <dbReference type="ChEBI" id="CHEBI:15377"/>
        <dbReference type="ChEBI" id="CHEBI:15378"/>
        <dbReference type="ChEBI" id="CHEBI:29959"/>
        <dbReference type="ChEBI" id="CHEBI:43474"/>
        <dbReference type="ChEBI" id="CHEBI:57642"/>
        <dbReference type="ChEBI" id="CHEBI:77875"/>
        <dbReference type="EC" id="2.5.1.72"/>
    </reaction>
    <physiologicalReaction direction="left-to-right" evidence="1">
        <dbReference type="Rhea" id="RHEA:25889"/>
    </physiologicalReaction>
</comment>
<comment type="cofactor">
    <cofactor evidence="1">
        <name>[4Fe-4S] cluster</name>
        <dbReference type="ChEBI" id="CHEBI:49883"/>
    </cofactor>
    <text evidence="1">Binds 1 [4Fe-4S] cluster per subunit.</text>
</comment>
<comment type="pathway">
    <text evidence="1">Cofactor biosynthesis; NAD(+) biosynthesis; quinolinate from iminoaspartate: step 1/1.</text>
</comment>
<comment type="subcellular location">
    <subcellularLocation>
        <location evidence="1">Cytoplasm</location>
    </subcellularLocation>
</comment>
<comment type="similarity">
    <text evidence="1">Belongs to the quinolinate synthase family. Type 1 subfamily.</text>
</comment>
<protein>
    <recommendedName>
        <fullName evidence="1">Quinolinate synthase</fullName>
        <ecNumber evidence="1">2.5.1.72</ecNumber>
    </recommendedName>
</protein>
<proteinExistence type="inferred from homology"/>
<accession>B7ULM3</accession>
<keyword id="KW-0004">4Fe-4S</keyword>
<keyword id="KW-0963">Cytoplasm</keyword>
<keyword id="KW-0408">Iron</keyword>
<keyword id="KW-0411">Iron-sulfur</keyword>
<keyword id="KW-0479">Metal-binding</keyword>
<keyword id="KW-0662">Pyridine nucleotide biosynthesis</keyword>
<keyword id="KW-1185">Reference proteome</keyword>
<keyword id="KW-0808">Transferase</keyword>
<feature type="chain" id="PRO_1000146804" description="Quinolinate synthase">
    <location>
        <begin position="1"/>
        <end position="347"/>
    </location>
</feature>
<feature type="binding site" evidence="1">
    <location>
        <position position="47"/>
    </location>
    <ligand>
        <name>iminosuccinate</name>
        <dbReference type="ChEBI" id="CHEBI:77875"/>
    </ligand>
</feature>
<feature type="binding site" evidence="1">
    <location>
        <position position="68"/>
    </location>
    <ligand>
        <name>iminosuccinate</name>
        <dbReference type="ChEBI" id="CHEBI:77875"/>
    </ligand>
</feature>
<feature type="binding site" evidence="1">
    <location>
        <position position="113"/>
    </location>
    <ligand>
        <name>[4Fe-4S] cluster</name>
        <dbReference type="ChEBI" id="CHEBI:49883"/>
    </ligand>
</feature>
<feature type="binding site" evidence="1">
    <location>
        <begin position="139"/>
        <end position="141"/>
    </location>
    <ligand>
        <name>iminosuccinate</name>
        <dbReference type="ChEBI" id="CHEBI:77875"/>
    </ligand>
</feature>
<feature type="binding site" evidence="1">
    <location>
        <position position="156"/>
    </location>
    <ligand>
        <name>iminosuccinate</name>
        <dbReference type="ChEBI" id="CHEBI:77875"/>
    </ligand>
</feature>
<feature type="binding site" evidence="1">
    <location>
        <position position="200"/>
    </location>
    <ligand>
        <name>[4Fe-4S] cluster</name>
        <dbReference type="ChEBI" id="CHEBI:49883"/>
    </ligand>
</feature>
<feature type="binding site" evidence="1">
    <location>
        <begin position="226"/>
        <end position="228"/>
    </location>
    <ligand>
        <name>iminosuccinate</name>
        <dbReference type="ChEBI" id="CHEBI:77875"/>
    </ligand>
</feature>
<feature type="binding site" evidence="1">
    <location>
        <position position="243"/>
    </location>
    <ligand>
        <name>iminosuccinate</name>
        <dbReference type="ChEBI" id="CHEBI:77875"/>
    </ligand>
</feature>
<feature type="binding site" evidence="1">
    <location>
        <position position="297"/>
    </location>
    <ligand>
        <name>[4Fe-4S] cluster</name>
        <dbReference type="ChEBI" id="CHEBI:49883"/>
    </ligand>
</feature>
<reference key="1">
    <citation type="journal article" date="2009" name="J. Bacteriol.">
        <title>Complete genome sequence and comparative genome analysis of enteropathogenic Escherichia coli O127:H6 strain E2348/69.</title>
        <authorList>
            <person name="Iguchi A."/>
            <person name="Thomson N.R."/>
            <person name="Ogura Y."/>
            <person name="Saunders D."/>
            <person name="Ooka T."/>
            <person name="Henderson I.R."/>
            <person name="Harris D."/>
            <person name="Asadulghani M."/>
            <person name="Kurokawa K."/>
            <person name="Dean P."/>
            <person name="Kenny B."/>
            <person name="Quail M.A."/>
            <person name="Thurston S."/>
            <person name="Dougan G."/>
            <person name="Hayashi T."/>
            <person name="Parkhill J."/>
            <person name="Frankel G."/>
        </authorList>
    </citation>
    <scope>NUCLEOTIDE SEQUENCE [LARGE SCALE GENOMIC DNA]</scope>
    <source>
        <strain>E2348/69 / EPEC</strain>
    </source>
</reference>
<sequence length="347" mass="38299">MSVMFDPDTAIYPFPPKPTPLSIDEKAYYREKIKRLLKERNAVMVAHYYTDPEIQQLAEETGGCISDSLEMARFGAKHPASTLLVAGVRFMGETAKILSPEKTILMPTLQAECSLDLGCPVEEFNAFCDAHPDRTVVVYANTSAAVKARADWVVTSSIAVELIDHLDSLGEKIIWAPDTHLGRYVQKQTGADILCWQGACIVHDEFKTQALTRLQEEYPDAAILVHPESPQAIVEMADAVGSTSQLIAAAKTLQHQRLIVATDRGIFYKMQQAVPDKELLEAPTAGEGATCRSCAHCPWMAMNGLQAIAEALEQEGSNHEVYVDERLRERALVPLNRMLDFAATLRG</sequence>